<protein>
    <recommendedName>
        <fullName>ATP synthase subunit 9, mitochondrial</fullName>
    </recommendedName>
    <alternativeName>
        <fullName>Lipid-binding protein</fullName>
    </alternativeName>
</protein>
<reference key="1">
    <citation type="journal article" date="1996" name="Plant Cell">
        <title>Altered mitochondrial gene expression in a maternal distorted leaf mutant of Arabidopsis induced by chloroplast mutator.</title>
        <authorList>
            <person name="Sakamoto W."/>
            <person name="Kondo H."/>
            <person name="Murata M."/>
            <person name="Motoyoshi F."/>
        </authorList>
    </citation>
    <scope>NUCLEOTIDE SEQUENCE [GENOMIC DNA]</scope>
    <source>
        <strain>cv. Landsberg erecta</strain>
    </source>
</reference>
<reference key="2">
    <citation type="journal article" date="1997" name="Nat. Genet.">
        <title>The mitochondrial genome of Arabidopsis thaliana contains 57 genes in 366,924 nucleotides.</title>
        <authorList>
            <person name="Unseld M."/>
            <person name="Marienfeld J.R."/>
            <person name="Brandt P."/>
            <person name="Brennicke A."/>
        </authorList>
    </citation>
    <scope>NUCLEOTIDE SEQUENCE [LARGE SCALE GENOMIC DNA]</scope>
    <source>
        <strain>cv. C24</strain>
    </source>
</reference>
<reference key="3">
    <citation type="journal article" date="2018" name="Plant Cell">
        <title>Correction of persistent errors in Arabidopsis reference mitochondrial genomes.</title>
        <authorList>
            <person name="Sloan D.B."/>
            <person name="Wu Z."/>
            <person name="Sharbrough J."/>
        </authorList>
    </citation>
    <scope>NUCLEOTIDE SEQUENCE [LARGE SCALE GENOMIC DNA]</scope>
    <scope>RNA EDITING</scope>
    <source>
        <strain>cv. Columbia</strain>
    </source>
</reference>
<reference key="4">
    <citation type="journal article" date="1999" name="Nature">
        <title>Sequence and analysis of chromosome 2 of the plant Arabidopsis thaliana.</title>
        <authorList>
            <person name="Lin X."/>
            <person name="Kaul S."/>
            <person name="Rounsley S.D."/>
            <person name="Shea T.P."/>
            <person name="Benito M.-I."/>
            <person name="Town C.D."/>
            <person name="Fujii C.Y."/>
            <person name="Mason T.M."/>
            <person name="Bowman C.L."/>
            <person name="Barnstead M.E."/>
            <person name="Feldblyum T.V."/>
            <person name="Buell C.R."/>
            <person name="Ketchum K.A."/>
            <person name="Lee J.J."/>
            <person name="Ronning C.M."/>
            <person name="Koo H.L."/>
            <person name="Moffat K.S."/>
            <person name="Cronin L.A."/>
            <person name="Shen M."/>
            <person name="Pai G."/>
            <person name="Van Aken S."/>
            <person name="Umayam L."/>
            <person name="Tallon L.J."/>
            <person name="Gill J.E."/>
            <person name="Adams M.D."/>
            <person name="Carrera A.J."/>
            <person name="Creasy T.H."/>
            <person name="Goodman H.M."/>
            <person name="Somerville C.R."/>
            <person name="Copenhaver G.P."/>
            <person name="Preuss D."/>
            <person name="Nierman W.C."/>
            <person name="White O."/>
            <person name="Eisen J.A."/>
            <person name="Salzberg S.L."/>
            <person name="Fraser C.M."/>
            <person name="Venter J.C."/>
        </authorList>
    </citation>
    <scope>NUCLEOTIDE SEQUENCE [LARGE SCALE GENOMIC DNA] (AT2G07671)</scope>
    <source>
        <strain>cv. Columbia</strain>
    </source>
</reference>
<reference key="5">
    <citation type="journal article" date="2008" name="Genetics">
        <title>Genetic architecture of mitochondrial editing in Arabidopsis thaliana.</title>
        <authorList>
            <person name="Bentolila S."/>
            <person name="Elliott L.E."/>
            <person name="Hanson M.R."/>
        </authorList>
    </citation>
    <scope>NUCLEOTIDE SEQUENCE [MRNA] OF 17-78</scope>
    <scope>RNA EDITING</scope>
    <source>
        <strain>cv. Columbia</strain>
        <strain>cv. Landsberg erecta</strain>
        <tissue>Rosette leaf</tissue>
    </source>
</reference>
<reference key="6">
    <citation type="journal article" date="1999" name="Proc. Natl. Acad. Sci. U.S.A.">
        <title>RNA editing in Arabidopsis mitochondria effects 441 C to U changes in ORFs.</title>
        <authorList>
            <person name="Giege P."/>
            <person name="Brennicke A."/>
        </authorList>
    </citation>
    <scope>RNA EDITING</scope>
</reference>
<sequence>MTKREYNSQPEMLEGAKLIGAGAATIALAGAAIGIGNVFSSLIHSVARNPSLAKQLFGYAILGFALTEAIALFALMMAFLILFVF</sequence>
<keyword id="KW-0067">ATP-binding</keyword>
<keyword id="KW-0138">CF(0)</keyword>
<keyword id="KW-0375">Hydrogen ion transport</keyword>
<keyword id="KW-0406">Ion transport</keyword>
<keyword id="KW-0446">Lipid-binding</keyword>
<keyword id="KW-0472">Membrane</keyword>
<keyword id="KW-0496">Mitochondrion</keyword>
<keyword id="KW-0547">Nucleotide-binding</keyword>
<keyword id="KW-1185">Reference proteome</keyword>
<keyword id="KW-0691">RNA editing</keyword>
<keyword id="KW-0812">Transmembrane</keyword>
<keyword id="KW-1133">Transmembrane helix</keyword>
<keyword id="KW-0813">Transport</keyword>
<accession>P60112</accession>
<accession>A0A2P2CLG8</accession>
<accession>A7KNE9</accession>
<accession>Q08366</accession>
<accession>Q8S875</accession>
<proteinExistence type="evidence at transcript level"/>
<dbReference type="EMBL" id="D82062">
    <property type="protein sequence ID" value="BAA11530.1"/>
    <property type="status" value="ALT_SEQ"/>
    <property type="molecule type" value="Genomic_DNA"/>
</dbReference>
<dbReference type="EMBL" id="Y08501">
    <property type="protein sequence ID" value="CAA69793.3"/>
    <property type="status" value="ALT_SEQ"/>
    <property type="molecule type" value="Genomic_DNA"/>
</dbReference>
<dbReference type="EMBL" id="BK010421">
    <property type="protein sequence ID" value="DAB41516.2"/>
    <property type="status" value="ALT_INIT"/>
    <property type="molecule type" value="Genomic_DNA"/>
</dbReference>
<dbReference type="EMBL" id="AC007730">
    <property type="protein sequence ID" value="AAM15515.1"/>
    <property type="status" value="ALT_SEQ"/>
    <property type="molecule type" value="Genomic_DNA"/>
</dbReference>
<dbReference type="EMBL" id="EF488892">
    <property type="protein sequence ID" value="ABS50604.1"/>
    <property type="molecule type" value="mRNA"/>
</dbReference>
<dbReference type="EMBL" id="EF488893">
    <property type="protein sequence ID" value="ABS50605.1"/>
    <property type="molecule type" value="mRNA"/>
</dbReference>
<dbReference type="RefSeq" id="NP_085561.2">
    <property type="nucleotide sequence ID" value="NC_001284.2"/>
</dbReference>
<dbReference type="RefSeq" id="NP_178769.2">
    <property type="nucleotide sequence ID" value="NM_126728.3"/>
</dbReference>
<dbReference type="SMR" id="P60112"/>
<dbReference type="FunCoup" id="P60112">
    <property type="interactions" value="853"/>
</dbReference>
<dbReference type="IntAct" id="P60112">
    <property type="interactions" value="2"/>
</dbReference>
<dbReference type="STRING" id="3702.P60112"/>
<dbReference type="PaxDb" id="3702-AT2G07671.1"/>
<dbReference type="KEGG" id="ath:AT2G07671"/>
<dbReference type="Araport" id="ATMG01080"/>
<dbReference type="TAIR" id="ATMG01080">
    <property type="gene designation" value="ATP9"/>
</dbReference>
<dbReference type="eggNOG" id="ENOG502S4GY">
    <property type="taxonomic scope" value="Eukaryota"/>
</dbReference>
<dbReference type="InParanoid" id="P60112"/>
<dbReference type="OrthoDB" id="1107691at2759"/>
<dbReference type="PRO" id="PR:P60112"/>
<dbReference type="Proteomes" id="UP000006548">
    <property type="component" value="Mitochondrion MT"/>
</dbReference>
<dbReference type="ExpressionAtlas" id="P60112">
    <property type="expression patterns" value="baseline and differential"/>
</dbReference>
<dbReference type="GO" id="GO:0031966">
    <property type="term" value="C:mitochondrial membrane"/>
    <property type="evidence" value="ECO:0007669"/>
    <property type="project" value="UniProtKB-SubCell"/>
</dbReference>
<dbReference type="GO" id="GO:0045259">
    <property type="term" value="C:proton-transporting ATP synthase complex"/>
    <property type="evidence" value="ECO:0007669"/>
    <property type="project" value="UniProtKB-KW"/>
</dbReference>
<dbReference type="GO" id="GO:0033177">
    <property type="term" value="C:proton-transporting two-sector ATPase complex, proton-transporting domain"/>
    <property type="evidence" value="ECO:0007669"/>
    <property type="project" value="InterPro"/>
</dbReference>
<dbReference type="GO" id="GO:0005524">
    <property type="term" value="F:ATP binding"/>
    <property type="evidence" value="ECO:0007669"/>
    <property type="project" value="UniProtKB-KW"/>
</dbReference>
<dbReference type="GO" id="GO:0008289">
    <property type="term" value="F:lipid binding"/>
    <property type="evidence" value="ECO:0007669"/>
    <property type="project" value="UniProtKB-KW"/>
</dbReference>
<dbReference type="GO" id="GO:0015078">
    <property type="term" value="F:proton transmembrane transporter activity"/>
    <property type="evidence" value="ECO:0007669"/>
    <property type="project" value="InterPro"/>
</dbReference>
<dbReference type="GO" id="GO:0015986">
    <property type="term" value="P:proton motive force-driven ATP synthesis"/>
    <property type="evidence" value="ECO:0000318"/>
    <property type="project" value="GO_Central"/>
</dbReference>
<dbReference type="CDD" id="cd18182">
    <property type="entry name" value="ATP-synt_Fo_c_ATP5G3"/>
    <property type="match status" value="1"/>
</dbReference>
<dbReference type="FunFam" id="1.20.20.10:FF:000005">
    <property type="entry name" value="ATP synthase subunit 9, mitochondrial"/>
    <property type="match status" value="1"/>
</dbReference>
<dbReference type="Gene3D" id="1.20.20.10">
    <property type="entry name" value="F1F0 ATP synthase subunit C"/>
    <property type="match status" value="1"/>
</dbReference>
<dbReference type="HAMAP" id="MF_01396">
    <property type="entry name" value="ATP_synth_c_bact"/>
    <property type="match status" value="1"/>
</dbReference>
<dbReference type="InterPro" id="IPR000454">
    <property type="entry name" value="ATP_synth_F0_csu"/>
</dbReference>
<dbReference type="InterPro" id="IPR020537">
    <property type="entry name" value="ATP_synth_F0_csu_DDCD_BS"/>
</dbReference>
<dbReference type="InterPro" id="IPR038662">
    <property type="entry name" value="ATP_synth_F0_csu_sf"/>
</dbReference>
<dbReference type="InterPro" id="IPR002379">
    <property type="entry name" value="ATPase_proteolipid_c-like_dom"/>
</dbReference>
<dbReference type="InterPro" id="IPR035921">
    <property type="entry name" value="F/V-ATP_Csub_sf"/>
</dbReference>
<dbReference type="PANTHER" id="PTHR10031">
    <property type="entry name" value="ATP SYNTHASE LIPID-BINDING PROTEIN, MITOCHONDRIAL"/>
    <property type="match status" value="1"/>
</dbReference>
<dbReference type="PANTHER" id="PTHR10031:SF0">
    <property type="entry name" value="ATPASE PROTEIN 9"/>
    <property type="match status" value="1"/>
</dbReference>
<dbReference type="Pfam" id="PF00137">
    <property type="entry name" value="ATP-synt_C"/>
    <property type="match status" value="1"/>
</dbReference>
<dbReference type="PRINTS" id="PR00124">
    <property type="entry name" value="ATPASEC"/>
</dbReference>
<dbReference type="SUPFAM" id="SSF81333">
    <property type="entry name" value="F1F0 ATP synthase subunit C"/>
    <property type="match status" value="1"/>
</dbReference>
<dbReference type="PROSITE" id="PS00605">
    <property type="entry name" value="ATPASE_C"/>
    <property type="match status" value="1"/>
</dbReference>
<geneLocation type="mitochondrion"/>
<comment type="function">
    <text>This protein is one of the chains of the nonenzymatic membrane component (F0) of mitochondrial ATPase.</text>
</comment>
<comment type="subunit">
    <text evidence="1">F-type ATPases have 2 components, CF(1) - the catalytic core - and CF(0) - the membrane proton channel. CF(1) has five subunits: alpha(3), beta(3), gamma(1), delta(1), epsilon(1). CF(0) has three main subunits: a, b and c (By similarity).</text>
</comment>
<comment type="subcellular location">
    <subcellularLocation>
        <location evidence="6">Mitochondrion membrane</location>
        <topology evidence="6">Multi-pass membrane protein</topology>
    </subcellularLocation>
</comment>
<comment type="RNA editing">
    <location>
        <position position="18" evidence="3 4 5"/>
    </location>
    <location>
        <position position="28" evidence="3 4 5"/>
    </location>
    <location>
        <position position="56" evidence="3 4 5"/>
    </location>
    <location>
        <position position="75" evidence="3 4 5"/>
    </location>
</comment>
<comment type="miscellaneous">
    <text>A stretch of 270 kb of the mitochondrial genome is duplicated within the centromere of chromosome 2 resulting in the duplication of the gene. The expression of this duplicated gene (At2g07671) is not demonstrated. It is also probably not RNA edited and therefore differs in all the positions known to be edited.</text>
</comment>
<comment type="similarity">
    <text evidence="6">Belongs to the ATPase C chain family.</text>
</comment>
<comment type="sequence caution" evidence="6">
    <conflict type="erroneous gene model prediction">
        <sequence resource="EMBL-CDS" id="AAM15515"/>
    </conflict>
</comment>
<comment type="sequence caution" evidence="6">
    <conflict type="erroneous initiation">
        <sequence resource="EMBL-CDS" id="DAB41516"/>
    </conflict>
    <text>Truncated N-terminus.</text>
</comment>
<feature type="chain" id="PRO_0000112208" description="ATP synthase subunit 9, mitochondrial">
    <location>
        <begin position="1"/>
        <end position="85"/>
    </location>
</feature>
<feature type="transmembrane region" description="Helical" evidence="2">
    <location>
        <begin position="19"/>
        <end position="39"/>
    </location>
</feature>
<feature type="transmembrane region" description="Helical" evidence="1">
    <location>
        <begin position="61"/>
        <end position="81"/>
    </location>
</feature>
<feature type="site" description="Reversibly protonated during proton transport" evidence="1">
    <location>
        <position position="68"/>
    </location>
</feature>
<gene>
    <name type="primary">ATP9</name>
    <name type="ordered locus">AtMg01080</name>
</gene>
<evidence type="ECO:0000250" key="1"/>
<evidence type="ECO:0000255" key="2"/>
<evidence type="ECO:0000269" key="3">
    <source>
    </source>
</evidence>
<evidence type="ECO:0000269" key="4">
    <source>
    </source>
</evidence>
<evidence type="ECO:0000269" key="5">
    <source>
    </source>
</evidence>
<evidence type="ECO:0000305" key="6"/>
<organism>
    <name type="scientific">Arabidopsis thaliana</name>
    <name type="common">Mouse-ear cress</name>
    <dbReference type="NCBI Taxonomy" id="3702"/>
    <lineage>
        <taxon>Eukaryota</taxon>
        <taxon>Viridiplantae</taxon>
        <taxon>Streptophyta</taxon>
        <taxon>Embryophyta</taxon>
        <taxon>Tracheophyta</taxon>
        <taxon>Spermatophyta</taxon>
        <taxon>Magnoliopsida</taxon>
        <taxon>eudicotyledons</taxon>
        <taxon>Gunneridae</taxon>
        <taxon>Pentapetalae</taxon>
        <taxon>rosids</taxon>
        <taxon>malvids</taxon>
        <taxon>Brassicales</taxon>
        <taxon>Brassicaceae</taxon>
        <taxon>Camelineae</taxon>
        <taxon>Arabidopsis</taxon>
    </lineage>
</organism>
<name>ATP9_ARATH</name>